<protein>
    <recommendedName>
        <fullName evidence="10">Uncharacterized protein SLP1</fullName>
    </recommendedName>
    <alternativeName>
        <fullName evidence="9">SUN-like protein 1</fullName>
    </alternativeName>
</protein>
<name>SLP1_YEAST</name>
<comment type="function">
    <text evidence="7 8">May be involved in membrane protein folding (PubMed:19325107). Required for localization of MPS3 to the nuclear envelope (PubMed:23275891).</text>
</comment>
<comment type="subunit">
    <text evidence="8">Interacts with EMP65.</text>
</comment>
<comment type="interaction">
    <interactant intactId="EBI-35990">
        <id>Q12232</id>
    </interactant>
    <interactant intactId="EBI-22717">
        <id>P40085</id>
        <label>EMP65</label>
    </interactant>
    <organismsDiffer>false</organismsDiffer>
    <experiments>4</experiments>
</comment>
<comment type="subcellular location">
    <subcellularLocation>
        <location evidence="5 8">Endoplasmic reticulum membrane</location>
        <topology evidence="1">Single-pass type I membrane protein</topology>
    </subcellularLocation>
</comment>
<comment type="miscellaneous">
    <text evidence="6">Present with 3250 molecules/cell in log phase SD medium.</text>
</comment>
<comment type="similarity">
    <text evidence="10">Belongs to the SLP1 family.</text>
</comment>
<organism>
    <name type="scientific">Saccharomyces cerevisiae (strain ATCC 204508 / S288c)</name>
    <name type="common">Baker's yeast</name>
    <dbReference type="NCBI Taxonomy" id="559292"/>
    <lineage>
        <taxon>Eukaryota</taxon>
        <taxon>Fungi</taxon>
        <taxon>Dikarya</taxon>
        <taxon>Ascomycota</taxon>
        <taxon>Saccharomycotina</taxon>
        <taxon>Saccharomycetes</taxon>
        <taxon>Saccharomycetales</taxon>
        <taxon>Saccharomycetaceae</taxon>
        <taxon>Saccharomyces</taxon>
    </lineage>
</organism>
<sequence>MANRLLIYGLILWVSIIGSFALDRNKTAQNAKIGLHDTTVITTGSTTNVQKEHSSPLSTGSLRTHDFRQASKVDIRQADIRENGERKEQDALTQPATPRNPGDSSNSFLSFDEWKKVKSKEHSSGPERHLSRVREPVDPSCYKEKECIGEELEIDLGFLTNKNEWSEREENQKGFNEEKDIEKVYKKKFNYASLDCAATIVKSNPEAIGATSTLIESKDKYLLNPCSAPQQFIVIELCEDILVEEIEIANYEFFSSTFKRFRVSVSDRIPMVKNEWTILGEFEARNSRELQKFQIHNPQIWASYLKIEILSHYEDEFYCPISLIKVYGKSMMDEFKIDQLKAQEDKEQSIGTNNINNLNEQNIQDRCNNIETRLETPNTSNLSDLAGALSCTSKLIPLKFDEFFKVLNASFCPSKQMISSSSSSAVPVIPEESIFKNIMKRLSQLETNSSLTVSYIEEQSKLLSKSFEQLEMAHEAKFSHLVTIFNETMMSNLDLLNNFANQLKDQSLRILEEQKLENDKFTNRHLLHLERLEKEVSFQRRIVYASFFAFVGLISYLLITRELYFEDFEESKNGAIEKADIVQQAIR</sequence>
<evidence type="ECO:0000255" key="1"/>
<evidence type="ECO:0000255" key="2">
    <source>
        <dbReference type="PROSITE-ProRule" id="PRU00498"/>
    </source>
</evidence>
<evidence type="ECO:0000255" key="3">
    <source>
        <dbReference type="PROSITE-ProRule" id="PRU00802"/>
    </source>
</evidence>
<evidence type="ECO:0000256" key="4">
    <source>
        <dbReference type="SAM" id="MobiDB-lite"/>
    </source>
</evidence>
<evidence type="ECO:0000269" key="5">
    <source>
    </source>
</evidence>
<evidence type="ECO:0000269" key="6">
    <source>
    </source>
</evidence>
<evidence type="ECO:0000269" key="7">
    <source>
    </source>
</evidence>
<evidence type="ECO:0000269" key="8">
    <source>
    </source>
</evidence>
<evidence type="ECO:0000303" key="9">
    <source>
    </source>
</evidence>
<evidence type="ECO:0000305" key="10"/>
<evidence type="ECO:0000305" key="11">
    <source>
    </source>
</evidence>
<evidence type="ECO:0000312" key="12">
    <source>
        <dbReference type="SGD" id="S000005680"/>
    </source>
</evidence>
<feature type="signal peptide" evidence="1">
    <location>
        <begin position="1"/>
        <end position="21"/>
    </location>
</feature>
<feature type="chain" id="PRO_0000237659" description="Uncharacterized protein SLP1">
    <location>
        <begin position="22"/>
        <end position="587"/>
    </location>
</feature>
<feature type="topological domain" description="Lumenal" evidence="11">
    <location>
        <begin position="22"/>
        <end position="541"/>
    </location>
</feature>
<feature type="transmembrane region" description="Helical" evidence="1">
    <location>
        <begin position="542"/>
        <end position="562"/>
    </location>
</feature>
<feature type="topological domain" description="Cytoplasmic" evidence="11">
    <location>
        <begin position="563"/>
        <end position="587"/>
    </location>
</feature>
<feature type="domain" description="SUN" evidence="3">
    <location>
        <begin position="163"/>
        <end position="331"/>
    </location>
</feature>
<feature type="region of interest" description="Disordered" evidence="4">
    <location>
        <begin position="44"/>
        <end position="108"/>
    </location>
</feature>
<feature type="compositionally biased region" description="Basic and acidic residues" evidence="4">
    <location>
        <begin position="63"/>
        <end position="90"/>
    </location>
</feature>
<feature type="compositionally biased region" description="Polar residues" evidence="4">
    <location>
        <begin position="91"/>
        <end position="108"/>
    </location>
</feature>
<feature type="glycosylation site" description="N-linked (GlcNAc...) asparagine" evidence="2">
    <location>
        <position position="25"/>
    </location>
</feature>
<feature type="glycosylation site" description="N-linked (GlcNAc...) asparagine" evidence="2">
    <location>
        <position position="378"/>
    </location>
</feature>
<feature type="glycosylation site" description="N-linked (GlcNAc...) asparagine" evidence="2">
    <location>
        <position position="381"/>
    </location>
</feature>
<feature type="glycosylation site" description="N-linked (GlcNAc...) asparagine" evidence="2">
    <location>
        <position position="408"/>
    </location>
</feature>
<feature type="glycosylation site" description="N-linked (GlcNAc...) asparagine" evidence="2">
    <location>
        <position position="448"/>
    </location>
</feature>
<feature type="glycosylation site" description="N-linked (GlcNAc...) asparagine" evidence="2">
    <location>
        <position position="486"/>
    </location>
</feature>
<proteinExistence type="evidence at protein level"/>
<accession>Q12232</accession>
<accession>D6W2L1</accession>
<reference key="1">
    <citation type="journal article" date="1997" name="Yeast">
        <title>Analysis of a 35.6 kb region on the right arm of Saccharomyces cerevisiae chromosome XV.</title>
        <authorList>
            <person name="Bordonne R."/>
            <person name="Camasses A."/>
            <person name="Madania A."/>
            <person name="Poch O."/>
            <person name="Tarassov I.A."/>
            <person name="Winsor B."/>
            <person name="Martin R.P."/>
        </authorList>
    </citation>
    <scope>NUCLEOTIDE SEQUENCE [GENOMIC DNA]</scope>
    <source>
        <strain>S288c / FY1678</strain>
    </source>
</reference>
<reference key="2">
    <citation type="journal article" date="1997" name="Nature">
        <title>The nucleotide sequence of Saccharomyces cerevisiae chromosome XV.</title>
        <authorList>
            <person name="Dujon B."/>
            <person name="Albermann K."/>
            <person name="Aldea M."/>
            <person name="Alexandraki D."/>
            <person name="Ansorge W."/>
            <person name="Arino J."/>
            <person name="Benes V."/>
            <person name="Bohn C."/>
            <person name="Bolotin-Fukuhara M."/>
            <person name="Bordonne R."/>
            <person name="Boyer J."/>
            <person name="Camasses A."/>
            <person name="Casamayor A."/>
            <person name="Casas C."/>
            <person name="Cheret G."/>
            <person name="Cziepluch C."/>
            <person name="Daignan-Fornier B."/>
            <person name="Dang V.-D."/>
            <person name="de Haan M."/>
            <person name="Delius H."/>
            <person name="Durand P."/>
            <person name="Fairhead C."/>
            <person name="Feldmann H."/>
            <person name="Gaillon L."/>
            <person name="Galisson F."/>
            <person name="Gamo F.-J."/>
            <person name="Gancedo C."/>
            <person name="Goffeau A."/>
            <person name="Goulding S.E."/>
            <person name="Grivell L.A."/>
            <person name="Habbig B."/>
            <person name="Hand N.J."/>
            <person name="Hani J."/>
            <person name="Hattenhorst U."/>
            <person name="Hebling U."/>
            <person name="Hernando Y."/>
            <person name="Herrero E."/>
            <person name="Heumann K."/>
            <person name="Hiesel R."/>
            <person name="Hilger F."/>
            <person name="Hofmann B."/>
            <person name="Hollenberg C.P."/>
            <person name="Hughes B."/>
            <person name="Jauniaux J.-C."/>
            <person name="Kalogeropoulos A."/>
            <person name="Katsoulou C."/>
            <person name="Kordes E."/>
            <person name="Lafuente M.J."/>
            <person name="Landt O."/>
            <person name="Louis E.J."/>
            <person name="Maarse A.C."/>
            <person name="Madania A."/>
            <person name="Mannhaupt G."/>
            <person name="Marck C."/>
            <person name="Martin R.P."/>
            <person name="Mewes H.-W."/>
            <person name="Michaux G."/>
            <person name="Paces V."/>
            <person name="Parle-McDermott A.G."/>
            <person name="Pearson B.M."/>
            <person name="Perrin A."/>
            <person name="Pettersson B."/>
            <person name="Poch O."/>
            <person name="Pohl T.M."/>
            <person name="Poirey R."/>
            <person name="Portetelle D."/>
            <person name="Pujol A."/>
            <person name="Purnelle B."/>
            <person name="Ramezani Rad M."/>
            <person name="Rechmann S."/>
            <person name="Schwager C."/>
            <person name="Schweizer M."/>
            <person name="Sor F."/>
            <person name="Sterky F."/>
            <person name="Tarassov I.A."/>
            <person name="Teodoru C."/>
            <person name="Tettelin H."/>
            <person name="Thierry A."/>
            <person name="Tobiasch E."/>
            <person name="Tzermia M."/>
            <person name="Uhlen M."/>
            <person name="Unseld M."/>
            <person name="Valens M."/>
            <person name="Vandenbol M."/>
            <person name="Vetter I."/>
            <person name="Vlcek C."/>
            <person name="Voet M."/>
            <person name="Volckaert G."/>
            <person name="Voss H."/>
            <person name="Wambutt R."/>
            <person name="Wedler H."/>
            <person name="Wiemann S."/>
            <person name="Winsor B."/>
            <person name="Wolfe K.H."/>
            <person name="Zollner A."/>
            <person name="Zumstein E."/>
            <person name="Kleine K."/>
        </authorList>
    </citation>
    <scope>NUCLEOTIDE SEQUENCE [LARGE SCALE GENOMIC DNA]</scope>
    <source>
        <strain>ATCC 204508 / S288c</strain>
    </source>
</reference>
<reference key="3">
    <citation type="journal article" date="2014" name="G3 (Bethesda)">
        <title>The reference genome sequence of Saccharomyces cerevisiae: Then and now.</title>
        <authorList>
            <person name="Engel S.R."/>
            <person name="Dietrich F.S."/>
            <person name="Fisk D.G."/>
            <person name="Binkley G."/>
            <person name="Balakrishnan R."/>
            <person name="Costanzo M.C."/>
            <person name="Dwight S.S."/>
            <person name="Hitz B.C."/>
            <person name="Karra K."/>
            <person name="Nash R.S."/>
            <person name="Weng S."/>
            <person name="Wong E.D."/>
            <person name="Lloyd P."/>
            <person name="Skrzypek M.S."/>
            <person name="Miyasato S.R."/>
            <person name="Simison M."/>
            <person name="Cherry J.M."/>
        </authorList>
    </citation>
    <scope>GENOME REANNOTATION</scope>
    <source>
        <strain>ATCC 204508 / S288c</strain>
    </source>
</reference>
<reference key="4">
    <citation type="journal article" date="2002" name="Curr. Genet.">
        <title>Sequence-based approach for identification of cell wall proteins in Saccharomyces cerevisiae.</title>
        <authorList>
            <person name="Terashima H."/>
            <person name="Fukuchi S."/>
            <person name="Nakai K."/>
            <person name="Arisawa M."/>
            <person name="Hamada K."/>
            <person name="Yabuki N."/>
            <person name="Kitada K."/>
        </authorList>
    </citation>
    <scope>SUBCELLULAR LOCATION</scope>
</reference>
<reference key="5">
    <citation type="journal article" date="2003" name="Nature">
        <title>Global analysis of protein expression in yeast.</title>
        <authorList>
            <person name="Ghaemmaghami S."/>
            <person name="Huh W.-K."/>
            <person name="Bower K."/>
            <person name="Howson R.W."/>
            <person name="Belle A."/>
            <person name="Dephoure N."/>
            <person name="O'Shea E.K."/>
            <person name="Weissman J.S."/>
        </authorList>
    </citation>
    <scope>LEVEL OF PROTEIN EXPRESSION [LARGE SCALE ANALYSIS]</scope>
</reference>
<reference key="6">
    <citation type="journal article" date="2006" name="J. Cell Biol.">
        <title>The Sad1-UNC-84 homology domain in Mps3 interacts with Mps2 to connect the spindle pole body with the nuclear envelope.</title>
        <authorList>
            <person name="Jaspersen S.L."/>
            <person name="Martin A.E."/>
            <person name="Glazko G."/>
            <person name="Giddings T.H. Jr."/>
            <person name="Morgan G."/>
            <person name="Mushegian A."/>
            <person name="Winey M."/>
        </authorList>
    </citation>
    <scope>GENE NAME</scope>
</reference>
<reference key="7">
    <citation type="journal article" date="2009" name="Science">
        <title>Comprehensive characterization of genes required for protein folding in the endoplasmic reticulum.</title>
        <authorList>
            <person name="Jonikas M.C."/>
            <person name="Collins S.R."/>
            <person name="Denic V."/>
            <person name="Oh E."/>
            <person name="Quan E.M."/>
            <person name="Schmid V."/>
            <person name="Weibezahn J."/>
            <person name="Schwappach B."/>
            <person name="Walter P."/>
            <person name="Weissman J.S."/>
            <person name="Schuldiner M."/>
        </authorList>
    </citation>
    <scope>FUNCTION</scope>
</reference>
<reference key="8">
    <citation type="journal article" date="2012" name="G3 (Bethesda)">
        <title>Genetic analysis of Mps3 SUN domain mutants in Saccharomyces cerevisiae reveals an interaction with the SUN-like protein Slp1.</title>
        <authorList>
            <person name="Friederichs J.M."/>
            <person name="Gardner J.M."/>
            <person name="Smoyer C.J."/>
            <person name="Whetstine C.R."/>
            <person name="Gogol M."/>
            <person name="Slaughter B.D."/>
            <person name="Jaspersen S.L."/>
        </authorList>
    </citation>
    <scope>FUNCTION</scope>
    <scope>SUBCELLULAR LOCATION</scope>
    <scope>INTERACTION WITH EMP56</scope>
</reference>
<keyword id="KW-0256">Endoplasmic reticulum</keyword>
<keyword id="KW-0325">Glycoprotein</keyword>
<keyword id="KW-0472">Membrane</keyword>
<keyword id="KW-1185">Reference proteome</keyword>
<keyword id="KW-0732">Signal</keyword>
<keyword id="KW-0812">Transmembrane</keyword>
<keyword id="KW-1133">Transmembrane helix</keyword>
<gene>
    <name evidence="9" type="primary">SLP1</name>
    <name evidence="12" type="ordered locus">YOR154W</name>
    <name type="ORF">O3545</name>
</gene>
<dbReference type="EMBL" id="U55020">
    <property type="protein sequence ID" value="AAC49640.1"/>
    <property type="molecule type" value="Genomic_DNA"/>
</dbReference>
<dbReference type="EMBL" id="Z75062">
    <property type="protein sequence ID" value="CAA99360.1"/>
    <property type="molecule type" value="Genomic_DNA"/>
</dbReference>
<dbReference type="EMBL" id="BK006948">
    <property type="protein sequence ID" value="DAA10927.1"/>
    <property type="molecule type" value="Genomic_DNA"/>
</dbReference>
<dbReference type="PIR" id="S67042">
    <property type="entry name" value="S67042"/>
</dbReference>
<dbReference type="RefSeq" id="NP_014797.1">
    <property type="nucleotide sequence ID" value="NM_001183573.1"/>
</dbReference>
<dbReference type="SMR" id="Q12232"/>
<dbReference type="BioGRID" id="34550">
    <property type="interactions" value="111"/>
</dbReference>
<dbReference type="DIP" id="DIP-3829N"/>
<dbReference type="FunCoup" id="Q12232">
    <property type="interactions" value="64"/>
</dbReference>
<dbReference type="IntAct" id="Q12232">
    <property type="interactions" value="2"/>
</dbReference>
<dbReference type="STRING" id="4932.YOR154W"/>
<dbReference type="GlyCosmos" id="Q12232">
    <property type="glycosylation" value="6 sites, No reported glycans"/>
</dbReference>
<dbReference type="GlyGen" id="Q12232">
    <property type="glycosylation" value="6 sites"/>
</dbReference>
<dbReference type="PaxDb" id="4932-YOR154W"/>
<dbReference type="PeptideAtlas" id="Q12232"/>
<dbReference type="EnsemblFungi" id="YOR154W_mRNA">
    <property type="protein sequence ID" value="YOR154W"/>
    <property type="gene ID" value="YOR154W"/>
</dbReference>
<dbReference type="GeneID" id="854325"/>
<dbReference type="KEGG" id="sce:YOR154W"/>
<dbReference type="AGR" id="SGD:S000005680"/>
<dbReference type="SGD" id="S000005680">
    <property type="gene designation" value="SLP1"/>
</dbReference>
<dbReference type="VEuPathDB" id="FungiDB:YOR154W"/>
<dbReference type="eggNOG" id="KOG1396">
    <property type="taxonomic scope" value="Eukaryota"/>
</dbReference>
<dbReference type="GeneTree" id="ENSGT00390000013502"/>
<dbReference type="HOGENOM" id="CLU_006633_4_1_1"/>
<dbReference type="InParanoid" id="Q12232"/>
<dbReference type="OMA" id="YVIIELC"/>
<dbReference type="OrthoDB" id="266334at2759"/>
<dbReference type="BioCyc" id="YEAST:G3O-33671-MONOMER"/>
<dbReference type="BioGRID-ORCS" id="854325">
    <property type="hits" value="0 hits in 10 CRISPR screens"/>
</dbReference>
<dbReference type="PRO" id="PR:Q12232"/>
<dbReference type="Proteomes" id="UP000002311">
    <property type="component" value="Chromosome XV"/>
</dbReference>
<dbReference type="RNAct" id="Q12232">
    <property type="molecule type" value="protein"/>
</dbReference>
<dbReference type="GO" id="GO:0071944">
    <property type="term" value="C:cell periphery"/>
    <property type="evidence" value="ECO:0007005"/>
    <property type="project" value="SGD"/>
</dbReference>
<dbReference type="GO" id="GO:0005737">
    <property type="term" value="C:cytoplasm"/>
    <property type="evidence" value="ECO:0000318"/>
    <property type="project" value="GO_Central"/>
</dbReference>
<dbReference type="GO" id="GO:0005789">
    <property type="term" value="C:endoplasmic reticulum membrane"/>
    <property type="evidence" value="ECO:0000314"/>
    <property type="project" value="SGD"/>
</dbReference>
<dbReference type="GO" id="GO:0016020">
    <property type="term" value="C:membrane"/>
    <property type="evidence" value="ECO:0000318"/>
    <property type="project" value="GO_Central"/>
</dbReference>
<dbReference type="GO" id="GO:0034975">
    <property type="term" value="P:protein folding in endoplasmic reticulum"/>
    <property type="evidence" value="ECO:0007003"/>
    <property type="project" value="SGD"/>
</dbReference>
<dbReference type="FunFam" id="2.60.120.260:FF:000099">
    <property type="entry name" value="Uncharacterized protein, isoform C"/>
    <property type="match status" value="1"/>
</dbReference>
<dbReference type="Gene3D" id="2.60.120.260">
    <property type="entry name" value="Galactose-binding domain-like"/>
    <property type="match status" value="1"/>
</dbReference>
<dbReference type="InterPro" id="IPR008979">
    <property type="entry name" value="Galactose-bd-like_sf"/>
</dbReference>
<dbReference type="InterPro" id="IPR045120">
    <property type="entry name" value="Suco/Slp1-like"/>
</dbReference>
<dbReference type="InterPro" id="IPR012919">
    <property type="entry name" value="SUN_dom"/>
</dbReference>
<dbReference type="PANTHER" id="PTHR12953">
    <property type="entry name" value="MEMBRANE PROTEIN CH1 RELATED"/>
    <property type="match status" value="1"/>
</dbReference>
<dbReference type="PANTHER" id="PTHR12953:SF0">
    <property type="entry name" value="SUN DOMAIN-CONTAINING OSSIFICATION FACTOR"/>
    <property type="match status" value="1"/>
</dbReference>
<dbReference type="Pfam" id="PF07738">
    <property type="entry name" value="Sad1_UNC"/>
    <property type="match status" value="1"/>
</dbReference>
<dbReference type="SUPFAM" id="SSF49785">
    <property type="entry name" value="Galactose-binding domain-like"/>
    <property type="match status" value="1"/>
</dbReference>
<dbReference type="PROSITE" id="PS51469">
    <property type="entry name" value="SUN"/>
    <property type="match status" value="1"/>
</dbReference>